<gene>
    <name evidence="6" type="primary">R1</name>
</gene>
<proteinExistence type="inferred from homology"/>
<accession>A0A3G1DJG9</accession>
<protein>
    <recommendedName>
        <fullName evidence="6">Oxidoreductase R1</fullName>
        <ecNumber evidence="8">1.-.-.-</ecNumber>
    </recommendedName>
    <alternativeName>
        <fullName evidence="6">Squalestatin S1 biosynthesis cluster protein R1</fullName>
    </alternativeName>
</protein>
<reference key="1">
    <citation type="journal article" date="2016" name="Chem. Commun. (Camb.)">
        <title>Identification of genes encoding squalestatin S1 biosynthesis and in vitro production of new squalestatin analogues.</title>
        <authorList>
            <person name="Bonsch B."/>
            <person name="Belt V."/>
            <person name="Bartel C."/>
            <person name="Duensing N."/>
            <person name="Koziol M."/>
            <person name="Lazarus C.M."/>
            <person name="Bailey A.M."/>
            <person name="Simpson T.J."/>
            <person name="Cox R.J."/>
        </authorList>
    </citation>
    <scope>NUCLEOTIDE SEQUENCE [GENOMIC DNA]</scope>
    <scope>FUNCTION</scope>
</reference>
<reference key="2">
    <citation type="journal article" date="2001" name="Chem. Biol.">
        <title>Design and utility of oligonucleotide gene probes for fungal polyketide synthases.</title>
        <authorList>
            <person name="Nicholson T.P."/>
            <person name="Rudd B.A."/>
            <person name="Dawson M."/>
            <person name="Lazarus C.M."/>
            <person name="Simpson T.J."/>
            <person name="Cox R.J."/>
        </authorList>
    </citation>
    <scope>FUNCTION</scope>
</reference>
<reference key="3">
    <citation type="journal article" date="2004" name="Chem. Commun. (Camb.)">
        <title>Rapid cloning and expression of a fungal polyketide synthase gene involved in squalestatin biosynthesis.</title>
        <authorList>
            <person name="Cox R.J."/>
            <person name="Glod F."/>
            <person name="Hurley D."/>
            <person name="Lazarus C.M."/>
            <person name="Nicholson T.P."/>
            <person name="Rudd B.A."/>
            <person name="Simpson T.J."/>
            <person name="Wilkinson B."/>
            <person name="Zhang Y."/>
        </authorList>
    </citation>
    <scope>FUNCTION</scope>
</reference>
<reference key="4">
    <citation type="journal article" date="2017" name="Chem. Commun. (Camb.)">
        <title>In vitro kinetic study of the squalestatin tetraketide synthase dehydratase reveals the stereochemical course of a fungal highly reducing polyketide synthase.</title>
        <authorList>
            <person name="Liddle E."/>
            <person name="Scott A."/>
            <person name="Han L.C."/>
            <person name="Ivison D."/>
            <person name="Simpson T.J."/>
            <person name="Willis C.L."/>
            <person name="Cox R.J."/>
        </authorList>
    </citation>
    <scope>FUNCTION</scope>
</reference>
<comment type="function">
    <text evidence="1 2 3 4 5 8">Oxidoreductase; part of the gene cluster that mediates the biosynthesis of squalestatin S1 (SQS1, also known as zaragozic acid A), a heavily oxidized fungal polyketide that offers potent cholesterol lowering activity by targeting squalene synthase (SS) (PubMed:27056201). SQS1 is composed of a 2,8-dioxobicyclic[3.2.1]octane-3,4,5-tricarboxyclic acid core that is connected to two lipophilic polyketide arms (PubMed:27056201). These initial steps feature the priming of an unusual benzoic acid starter unit onto the highly reducing polyketide synthase pks2, followed by oxaloacetate extension and product release to generate a tricarboxylic acid containing product (By similarity). The phenylalanine ammonia lyase (PAL) M7 and the acyl-CoA ligase M9 are involved in transforming phenylalanine into benzoyl-CoA (By similarity). The citrate synthase-like protein R3 is involved in connecting the C-alpha-carbons of the hexaketide chain and oxaloacetate to afford the tricarboxylic acid unit (By similarity). The potential hydrolytic enzymes, M8 and M10, are in close proximity to pks2 and may participate in product release (By similarity). On the other side, the tetraketide arm is synthesized by a the squalestatin tetraketide synthase pks1 and enzymatically esterified to the core in the last biosynthetic step, by the acetyltransferase M4 (PubMed:11251290, PubMed:15489970, PubMed:28106181). The biosynthesis of the tetraketide must involve 3 rounds of chain extension (PubMed:11251290, PubMed:15489970, PubMed:28106181). After the first and second rounds methyl-transfer occurs, and in all rounds of extension the ketoreductase and dehydratase are active (PubMed:11251290, PubMed:15489970, PubMed:28106181). The enoyl reductase and C-MeT of pks1 are not active in the final round of extension (PubMed:11251290, PubMed:15489970, PubMed:28106181). The acetyltransferase M4 appears to have a broad substrate selectivity for its acyl CoA substrate, allowing the in vitro synthesis of novel squalestatins (Probable). The biosynthesis of SQS1 requires several oxidative steps likely performed by oxidoreductases M1, R1 and R2 (Probable). Finally, in support of the identification of the cluster as being responsible for SQS1 production, the cluster contains a gene encoding a putative squalene synthase (SS) R6, suggesting a likely mechanism for self-resistance (Probable).</text>
</comment>
<comment type="pathway">
    <text evidence="8">Secondary metabolite biosynthesis.</text>
</comment>
<comment type="similarity">
    <text evidence="7">Belongs to the asaB hydroxylase/desaturase family.</text>
</comment>
<keyword id="KW-0560">Oxidoreductase</keyword>
<dbReference type="EC" id="1.-.-.-" evidence="8"/>
<dbReference type="EMBL" id="KU946987">
    <property type="protein sequence ID" value="AMY15069.1"/>
    <property type="molecule type" value="Genomic_DNA"/>
</dbReference>
<dbReference type="SMR" id="A0A3G1DJG9"/>
<dbReference type="GO" id="GO:0016491">
    <property type="term" value="F:oxidoreductase activity"/>
    <property type="evidence" value="ECO:0007669"/>
    <property type="project" value="UniProtKB-KW"/>
</dbReference>
<dbReference type="InterPro" id="IPR044053">
    <property type="entry name" value="AsaB-like"/>
</dbReference>
<dbReference type="NCBIfam" id="NF041278">
    <property type="entry name" value="CmcJ_NvfI_EfuI"/>
    <property type="match status" value="1"/>
</dbReference>
<dbReference type="PANTHER" id="PTHR34598">
    <property type="entry name" value="BLL6449 PROTEIN"/>
    <property type="match status" value="1"/>
</dbReference>
<dbReference type="PANTHER" id="PTHR34598:SF3">
    <property type="entry name" value="OXIDOREDUCTASE AN1597"/>
    <property type="match status" value="1"/>
</dbReference>
<evidence type="ECO:0000250" key="1">
    <source>
        <dbReference type="UniProtKB" id="A0A345BJP6"/>
    </source>
</evidence>
<evidence type="ECO:0000269" key="2">
    <source>
    </source>
</evidence>
<evidence type="ECO:0000269" key="3">
    <source>
    </source>
</evidence>
<evidence type="ECO:0000269" key="4">
    <source>
    </source>
</evidence>
<evidence type="ECO:0000269" key="5">
    <source>
    </source>
</evidence>
<evidence type="ECO:0000303" key="6">
    <source>
    </source>
</evidence>
<evidence type="ECO:0000305" key="7"/>
<evidence type="ECO:0000305" key="8">
    <source>
    </source>
</evidence>
<sequence>MATAILPSTSGVIGLWDGTTDGKEGFMDYANGDTNVKQPKEYEIQVHDIRKLDPQPTLLKNGYELVDIPTVVTDEQFIESGKSDEGNAYIKDVYFAECKRIIEEVSGGVDLIIPVSFRMREQKGEKESTTKKLGNIESRYAPRPVAHLDRDTPTAITVLEETVGKEKAQELLSKHKRWAQVNVWRPIGNPATMWPLCFLNHDRIPTWNYDTHVGHVWSLNDPRVSDRGQKTYDCVVKHDDRYDYHYVSDLRPEECLVFCSFDSIPKYAMPHSAFWDNNVPADAPNRRSIEVRSLVFF</sequence>
<organism>
    <name type="scientific">Phoma sp. (strain ATCC 20986 / MF5453)</name>
    <dbReference type="NCBI Taxonomy" id="1828523"/>
    <lineage>
        <taxon>Eukaryota</taxon>
        <taxon>Fungi</taxon>
        <taxon>Dikarya</taxon>
        <taxon>Ascomycota</taxon>
        <taxon>Pezizomycotina</taxon>
        <taxon>Dothideomycetes</taxon>
        <taxon>Pleosporomycetidae</taxon>
        <taxon>Pleosporales</taxon>
        <taxon>Pleosporineae</taxon>
        <taxon>Didymellaceae</taxon>
        <taxon>Phoma</taxon>
    </lineage>
</organism>
<name>MFR1_PHOSM</name>
<feature type="chain" id="PRO_0000447839" description="Oxidoreductase R1">
    <location>
        <begin position="1"/>
        <end position="297"/>
    </location>
</feature>